<gene>
    <name evidence="29 33" type="primary">Alpl</name>
    <name type="synonym">Akp-2</name>
    <name type="synonym">Akp2</name>
</gene>
<evidence type="ECO:0000250" key="1">
    <source>
        <dbReference type="UniProtKB" id="P05186"/>
    </source>
</evidence>
<evidence type="ECO:0000250" key="2">
    <source>
        <dbReference type="UniProtKB" id="P05187"/>
    </source>
</evidence>
<evidence type="ECO:0000255" key="3"/>
<evidence type="ECO:0000255" key="4">
    <source>
        <dbReference type="PROSITE-ProRule" id="PRU10042"/>
    </source>
</evidence>
<evidence type="ECO:0000269" key="5">
    <source>
    </source>
</evidence>
<evidence type="ECO:0000269" key="6">
    <source>
    </source>
</evidence>
<evidence type="ECO:0000269" key="7">
    <source>
    </source>
</evidence>
<evidence type="ECO:0000269" key="8">
    <source>
    </source>
</evidence>
<evidence type="ECO:0000269" key="9">
    <source>
    </source>
</evidence>
<evidence type="ECO:0000269" key="10">
    <source>
    </source>
</evidence>
<evidence type="ECO:0000269" key="11">
    <source>
    </source>
</evidence>
<evidence type="ECO:0000269" key="12">
    <source>
    </source>
</evidence>
<evidence type="ECO:0000269" key="13">
    <source>
    </source>
</evidence>
<evidence type="ECO:0000269" key="14">
    <source>
    </source>
</evidence>
<evidence type="ECO:0000269" key="15">
    <source>
    </source>
</evidence>
<evidence type="ECO:0000269" key="16">
    <source>
    </source>
</evidence>
<evidence type="ECO:0000269" key="17">
    <source>
    </source>
</evidence>
<evidence type="ECO:0000269" key="18">
    <source>
    </source>
</evidence>
<evidence type="ECO:0000269" key="19">
    <source>
    </source>
</evidence>
<evidence type="ECO:0000269" key="20">
    <source>
    </source>
</evidence>
<evidence type="ECO:0000269" key="21">
    <source>
    </source>
</evidence>
<evidence type="ECO:0000269" key="22">
    <source>
    </source>
</evidence>
<evidence type="ECO:0000269" key="23">
    <source>
    </source>
</evidence>
<evidence type="ECO:0000269" key="24">
    <source>
    </source>
</evidence>
<evidence type="ECO:0000269" key="25">
    <source>
    </source>
</evidence>
<evidence type="ECO:0000269" key="26">
    <source>
    </source>
</evidence>
<evidence type="ECO:0000269" key="27">
    <source>
    </source>
</evidence>
<evidence type="ECO:0000303" key="28">
    <source>
    </source>
</evidence>
<evidence type="ECO:0000303" key="29">
    <source>
    </source>
</evidence>
<evidence type="ECO:0000303" key="30">
    <source>
    </source>
</evidence>
<evidence type="ECO:0000303" key="31">
    <source>
    </source>
</evidence>
<evidence type="ECO:0000305" key="32"/>
<evidence type="ECO:0000312" key="33">
    <source>
        <dbReference type="MGI" id="MGI:87983"/>
    </source>
</evidence>
<evidence type="ECO:0007744" key="34">
    <source>
    </source>
</evidence>
<proteinExistence type="evidence at protein level"/>
<keyword id="KW-0091">Biomineralization</keyword>
<keyword id="KW-0106">Calcium</keyword>
<keyword id="KW-1003">Cell membrane</keyword>
<keyword id="KW-1015">Disulfide bond</keyword>
<keyword id="KW-0325">Glycoprotein</keyword>
<keyword id="KW-0336">GPI-anchor</keyword>
<keyword id="KW-0378">Hydrolase</keyword>
<keyword id="KW-0449">Lipoprotein</keyword>
<keyword id="KW-0460">Magnesium</keyword>
<keyword id="KW-0472">Membrane</keyword>
<keyword id="KW-0479">Metal-binding</keyword>
<keyword id="KW-0496">Mitochondrion</keyword>
<keyword id="KW-0597">Phosphoprotein</keyword>
<keyword id="KW-1185">Reference proteome</keyword>
<keyword id="KW-0732">Signal</keyword>
<keyword id="KW-0862">Zinc</keyword>
<comment type="function">
    <text evidence="1 5 6 7 9 10 12 13 14 15 16 18 21 22 23 25 27">Alkaline phosphatase that metabolizes various phosphate compounds and plays a key role in skeletal mineralization and adaptive thermogenesis (PubMed:10620060, PubMed:11028439, PubMed:14982838, PubMed:23942722, PubMed:33981039). Has broad substrate specificity and can hydrolyze a considerable variety of compounds: however, only a few substrates, such as diphosphate (inorganic pyrophosphate; PPi), pyridoxal 5'-phosphate (PLP) and N-phosphocreatine are natural substrates (PubMed:19874193, PubMed:23942722, PubMed:33981039). Plays an essential role in skeletal and dental mineralization via its ability to hydrolyze extracellular diphosphate, a potent mineralization inhibitor, to phosphate: it thereby promotes hydroxyapatite crystal formation and increases inorganic phosphate concentration (PubMed:10620060, PubMed:11004006, PubMed:11028439, PubMed:12082181, PubMed:14982838, PubMed:32035618, PubMed:9056646). Acts in a non-redundant manner with PHOSPHO1 in skeletal mineralization: while PHOSPHO1 mediates the initiation of hydroxyapatite crystallization in the matrix vesicles (MVs), ALPL/TNAP catalyzes the spread of hydroxyapatite crystallization in the extracellular matrix (PubMed:20684022, PubMed:26457330). Also promotes dephosphorylation of osteopontin (SSP1), an inhibitor of hydroxyapatite crystallization in its phosphorylated state; it is however unclear whether ALPL/TNAP mediates SSP1 dephosphorylation via a direct or indirect manner (PubMed:23427088). Catalyzes dephosphorylation of PLP to pyridoxal (PL), the transportable form of vitamin B6, in order to provide a sufficient amount of PLP in the brain, an essential cofactor for enzymes catalyzing the synthesis of diverse neurotransmitters (PubMed:7550313). Additionally, also able to mediate ATP degradation in a stepwise manner to adenosine, thereby regulating the availability of ligands for purinergic receptors (PubMed:19874193, PubMed:23825434, PubMed:23942722, PubMed:32028019). Also capable of dephosphorylating microbial products, such as lipopolysaccharides (LPS) as well as other phosphorylated small-molecules, such as poly-inosine:cytosine (poly I:C) (By similarity). Acts as a key regulator of adaptive thermogenesis as part of the futile creatine cycle: localizes to the mitochondria of thermogenic fat cells and acts by mediating hydrolysis of N-phosphocreatine to initiate a futile cycle of creatine dephosphorylation and phosphorylation (PubMed:33981039). During the futile creatine cycle, creatine and N-phosphocreatine are in a futile cycle, which dissipates the high energy charge of N-phosphocreatine as heat without performing any mechanical or chemical work (PubMed:33981039).</text>
</comment>
<comment type="catalytic activity">
    <reaction evidence="4 12 16">
        <text>a phosphate monoester + H2O = an alcohol + phosphate</text>
        <dbReference type="Rhea" id="RHEA:15017"/>
        <dbReference type="ChEBI" id="CHEBI:15377"/>
        <dbReference type="ChEBI" id="CHEBI:30879"/>
        <dbReference type="ChEBI" id="CHEBI:43474"/>
        <dbReference type="ChEBI" id="CHEBI:67140"/>
        <dbReference type="EC" id="3.1.3.1"/>
    </reaction>
    <physiologicalReaction direction="left-to-right" evidence="12 16 20">
        <dbReference type="Rhea" id="RHEA:15018"/>
    </physiologicalReaction>
</comment>
<comment type="catalytic activity">
    <reaction evidence="12 16 20">
        <text>diphosphate + H2O = 2 phosphate + H(+)</text>
        <dbReference type="Rhea" id="RHEA:24576"/>
        <dbReference type="ChEBI" id="CHEBI:15377"/>
        <dbReference type="ChEBI" id="CHEBI:15378"/>
        <dbReference type="ChEBI" id="CHEBI:33019"/>
        <dbReference type="ChEBI" id="CHEBI:43474"/>
    </reaction>
    <physiologicalReaction direction="left-to-right" evidence="12 16 20">
        <dbReference type="Rhea" id="RHEA:24577"/>
    </physiologicalReaction>
</comment>
<comment type="catalytic activity">
    <reaction evidence="1">
        <text>pyridoxal 5'-phosphate + H2O = pyridoxal + phosphate</text>
        <dbReference type="Rhea" id="RHEA:20533"/>
        <dbReference type="ChEBI" id="CHEBI:15377"/>
        <dbReference type="ChEBI" id="CHEBI:17310"/>
        <dbReference type="ChEBI" id="CHEBI:43474"/>
        <dbReference type="ChEBI" id="CHEBI:597326"/>
    </reaction>
    <physiologicalReaction direction="left-to-right" evidence="1">
        <dbReference type="Rhea" id="RHEA:20534"/>
    </physiologicalReaction>
</comment>
<comment type="catalytic activity">
    <reaction evidence="1">
        <text>phosphoethanolamine + H2O = ethanolamine + phosphate</text>
        <dbReference type="Rhea" id="RHEA:16089"/>
        <dbReference type="ChEBI" id="CHEBI:15377"/>
        <dbReference type="ChEBI" id="CHEBI:43474"/>
        <dbReference type="ChEBI" id="CHEBI:57603"/>
        <dbReference type="ChEBI" id="CHEBI:58190"/>
    </reaction>
    <physiologicalReaction direction="left-to-right" evidence="1">
        <dbReference type="Rhea" id="RHEA:16090"/>
    </physiologicalReaction>
</comment>
<comment type="catalytic activity">
    <reaction evidence="23">
        <text>N-phosphocreatine + H2O = creatine + phosphate</text>
        <dbReference type="Rhea" id="RHEA:12977"/>
        <dbReference type="ChEBI" id="CHEBI:15377"/>
        <dbReference type="ChEBI" id="CHEBI:43474"/>
        <dbReference type="ChEBI" id="CHEBI:57947"/>
        <dbReference type="ChEBI" id="CHEBI:58092"/>
        <dbReference type="EC" id="3.9.1.1"/>
    </reaction>
    <physiologicalReaction direction="left-to-right" evidence="23">
        <dbReference type="Rhea" id="RHEA:12978"/>
    </physiologicalReaction>
</comment>
<comment type="catalytic activity">
    <reaction evidence="12">
        <text>ATP + H2O = ADP + phosphate + H(+)</text>
        <dbReference type="Rhea" id="RHEA:13065"/>
        <dbReference type="ChEBI" id="CHEBI:15377"/>
        <dbReference type="ChEBI" id="CHEBI:15378"/>
        <dbReference type="ChEBI" id="CHEBI:30616"/>
        <dbReference type="ChEBI" id="CHEBI:43474"/>
        <dbReference type="ChEBI" id="CHEBI:456216"/>
    </reaction>
    <physiologicalReaction direction="left-to-right" evidence="12">
        <dbReference type="Rhea" id="RHEA:13066"/>
    </physiologicalReaction>
</comment>
<comment type="catalytic activity">
    <reaction evidence="12">
        <text>ADP + H2O = AMP + phosphate + H(+)</text>
        <dbReference type="Rhea" id="RHEA:61436"/>
        <dbReference type="ChEBI" id="CHEBI:15377"/>
        <dbReference type="ChEBI" id="CHEBI:15378"/>
        <dbReference type="ChEBI" id="CHEBI:43474"/>
        <dbReference type="ChEBI" id="CHEBI:456215"/>
        <dbReference type="ChEBI" id="CHEBI:456216"/>
    </reaction>
    <physiologicalReaction direction="left-to-right" evidence="12">
        <dbReference type="Rhea" id="RHEA:61437"/>
    </physiologicalReaction>
</comment>
<comment type="catalytic activity">
    <reaction evidence="15 16">
        <text>AMP + H2O = adenosine + phosphate</text>
        <dbReference type="Rhea" id="RHEA:29375"/>
        <dbReference type="ChEBI" id="CHEBI:15377"/>
        <dbReference type="ChEBI" id="CHEBI:16335"/>
        <dbReference type="ChEBI" id="CHEBI:43474"/>
        <dbReference type="ChEBI" id="CHEBI:456215"/>
    </reaction>
    <physiologicalReaction direction="left-to-right" evidence="15 16">
        <dbReference type="Rhea" id="RHEA:29376"/>
    </physiologicalReaction>
</comment>
<comment type="cofactor">
    <cofactor evidence="2">
        <name>Mg(2+)</name>
        <dbReference type="ChEBI" id="CHEBI:18420"/>
    </cofactor>
    <text evidence="2">Binds 1 Mg(2+) ion.</text>
</comment>
<comment type="cofactor">
    <cofactor evidence="2">
        <name>Zn(2+)</name>
        <dbReference type="ChEBI" id="CHEBI:29105"/>
    </cofactor>
    <text evidence="2">Binds 2 Zn(2+) ions.</text>
</comment>
<comment type="cofactor">
    <cofactor evidence="1">
        <name>Ca(2+)</name>
        <dbReference type="ChEBI" id="CHEBI:29108"/>
    </cofactor>
</comment>
<comment type="activity regulation">
    <text evidence="20 23">Phosphatase activity is specifically inhibited by 5-((5-chloro-2-methoxyphenyl)sulfonamido)nicotinamide (SBI-425).</text>
</comment>
<comment type="subunit">
    <text evidence="1">Homodimer.</text>
</comment>
<comment type="subcellular location">
    <subcellularLocation>
        <location evidence="1">Cell membrane</location>
        <topology evidence="1">Lipid-anchor</topology>
        <topology evidence="1">GPI-anchor</topology>
    </subcellularLocation>
    <subcellularLocation>
        <location evidence="12 16">Extracellular vesicle membrane</location>
        <topology evidence="23">Lipid-anchor</topology>
        <topology evidence="23">GPI-anchor</topology>
    </subcellularLocation>
    <subcellularLocation>
        <location evidence="23">Mitochondrion membrane</location>
        <topology evidence="23">Lipid-anchor</topology>
        <topology evidence="23">GPI-anchor</topology>
    </subcellularLocation>
    <subcellularLocation>
        <location evidence="23">Mitochondrion intermembrane space</location>
    </subcellularLocation>
    <text evidence="12 16 23">Localizes to special class of extracellular vesicles, named matrix vesicles (MVs), which are released by osteogenic cells (PubMed:19874193, PubMed:23942722). Localizes to the mitochondria of thermogenic fat cells: tethered to mitochondrial membranes via a GPI-anchor and probably resides in the mitochondrion intermembrane space (PubMed:33981039).</text>
</comment>
<comment type="tissue specificity">
    <text evidence="15 24">Widely expressed (PubMed:3478679). Expressed in DRG neurons and spinal cord neurons (PubMed:23825434).</text>
</comment>
<comment type="developmental stage">
    <text evidence="17 19 26">Not expressed prior to gastrulation in embryo, while it is expressed before in extraembryonic lineage cells destined to form the chorion (PubMed:7789278). Expressed in both embryonic and extraembryonic lineages during embryogenesis (PubMed:7789278). Expressed in early bell stage dental mesenchymal cells at 15.5 dpc (at protein level) (PubMed:24028588). Expressed in bell stage dental mesenchymal cells at 17.5 dpc (PubMed:29148101).</text>
</comment>
<comment type="induction">
    <text evidence="23">By cold: up-regulated in response to cold both in brown and beige fat cells.</text>
</comment>
<comment type="domain">
    <text evidence="1">Calcium-binding is structural and does not influence the alkaline phosphatase activity. At very high concentrations, calcium can however substitute for zinc at zinc-binding sites, leading to strongly reduced enzyme activity.</text>
</comment>
<comment type="PTM">
    <text evidence="1">N-glycosylated.</text>
</comment>
<comment type="disruption phenotype">
    <text evidence="5 7 8 9 10 13 23 25 27">Early death caused by defective metabolism of vitamin B6 (PubMed:7550313). At about two weeks of age, mice display seizures from which they die (PubMed:7550313, PubMed:9056646). Seizures are caused by a defect in the metabolism of pyridoxal 5'-phosphate (PLP) similar to that found in patients with hypophosphatasia, which ultimately results in a decrease in levels of 4-aminobutanoate (GABA) in the brain (PubMed:7550313). Mice do not show defects in skeletal formation during the first 8 days of life (PubMed:10620060, PubMed:7550313). Skeletal defects first appear at approximately 10 days of age and are characterized by worsening rachitic changes, osteopenia and fracture (PubMed:10620060, PubMed:9056646). Osteoblasts differentiate normally but are unable to initiate mineralization: histologic studies reveal developmental arrest of chondrocyte differentiation in epiphyses and in growth plates with diminished or absent hypertrophic zones (PubMed:10620060, PubMed:11028439). Mineral crystals are initiated within matrix vesicles (MVs) of the growth plate and bone; however, mineral crystal proliferation and growth is inhibited in the matrix surrounding MVs, as in the case with hypophosphatasia (PubMed:14982838). Progressive osteoidosis from defective skeletal matrix mineralization is observed but not associated with features of secondary hyperparathyroidism (PubMed:10620060). Abnormal vitamin B6 metabolism is not the cause of impaired bone mineralization (PubMed:11169525). An accumulation of substrates is observed, characterized by strong elevation of urinary diphosphate (PPi) and phosphoethanolamine (PEA) levels and a striking accumulation of plasma PLP (PubMed:10620060). Mice lacking both Phospho1 and Alpl show a complete absence of skeletal mineralization, leading to perinatal lethality (PubMed:20684022). Bone mineralization in mice lacking both Enpp1 and Alpl is essentially normal, demonstrating that Enpp1 and Alpl are antagonist key regulators of bone mineralization by determining the normal steady-state levels of diphosphate (PPi) (PubMed:12082181). Conditional deletion in adipocytes leads to defective adaptive thermogenesis: defects are caused by abolition of the futile creatine cycle, thereby reducing whole-body energy expenditure and leading to rapid-onset obesity in mice, with no change in movement or feeding behavior (PubMed:33981039).</text>
</comment>
<comment type="miscellaneous">
    <text evidence="32">In most mammals there are four different isozymes: placental (ALPP), germ cell (ALPG), intestinal (ALPI) and tissue non-specific (liver/bone/kidney) (ALPL/TNAP).</text>
</comment>
<comment type="similarity">
    <text evidence="32">Belongs to the alkaline phosphatase family.</text>
</comment>
<reference key="1">
    <citation type="journal article" date="1987" name="Proc. Natl. Acad. Sci. U.S.A.">
        <title>Cloning and characterization of a cDNA coding for mouse placental alkaline phosphatase.</title>
        <authorList>
            <person name="Terao M."/>
            <person name="Mintz B."/>
        </authorList>
    </citation>
    <scope>NUCLEOTIDE SEQUENCE [MRNA]</scope>
    <scope>TISSUE SPECIFICITY</scope>
    <source>
        <tissue>Placenta</tissue>
    </source>
</reference>
<reference key="2">
    <citation type="journal article" date="2005" name="Science">
        <title>The transcriptional landscape of the mammalian genome.</title>
        <authorList>
            <person name="Carninci P."/>
            <person name="Kasukawa T."/>
            <person name="Katayama S."/>
            <person name="Gough J."/>
            <person name="Frith M.C."/>
            <person name="Maeda N."/>
            <person name="Oyama R."/>
            <person name="Ravasi T."/>
            <person name="Lenhard B."/>
            <person name="Wells C."/>
            <person name="Kodzius R."/>
            <person name="Shimokawa K."/>
            <person name="Bajic V.B."/>
            <person name="Brenner S.E."/>
            <person name="Batalov S."/>
            <person name="Forrest A.R."/>
            <person name="Zavolan M."/>
            <person name="Davis M.J."/>
            <person name="Wilming L.G."/>
            <person name="Aidinis V."/>
            <person name="Allen J.E."/>
            <person name="Ambesi-Impiombato A."/>
            <person name="Apweiler R."/>
            <person name="Aturaliya R.N."/>
            <person name="Bailey T.L."/>
            <person name="Bansal M."/>
            <person name="Baxter L."/>
            <person name="Beisel K.W."/>
            <person name="Bersano T."/>
            <person name="Bono H."/>
            <person name="Chalk A.M."/>
            <person name="Chiu K.P."/>
            <person name="Choudhary V."/>
            <person name="Christoffels A."/>
            <person name="Clutterbuck D.R."/>
            <person name="Crowe M.L."/>
            <person name="Dalla E."/>
            <person name="Dalrymple B.P."/>
            <person name="de Bono B."/>
            <person name="Della Gatta G."/>
            <person name="di Bernardo D."/>
            <person name="Down T."/>
            <person name="Engstrom P."/>
            <person name="Fagiolini M."/>
            <person name="Faulkner G."/>
            <person name="Fletcher C.F."/>
            <person name="Fukushima T."/>
            <person name="Furuno M."/>
            <person name="Futaki S."/>
            <person name="Gariboldi M."/>
            <person name="Georgii-Hemming P."/>
            <person name="Gingeras T.R."/>
            <person name="Gojobori T."/>
            <person name="Green R.E."/>
            <person name="Gustincich S."/>
            <person name="Harbers M."/>
            <person name="Hayashi Y."/>
            <person name="Hensch T.K."/>
            <person name="Hirokawa N."/>
            <person name="Hill D."/>
            <person name="Huminiecki L."/>
            <person name="Iacono M."/>
            <person name="Ikeo K."/>
            <person name="Iwama A."/>
            <person name="Ishikawa T."/>
            <person name="Jakt M."/>
            <person name="Kanapin A."/>
            <person name="Katoh M."/>
            <person name="Kawasawa Y."/>
            <person name="Kelso J."/>
            <person name="Kitamura H."/>
            <person name="Kitano H."/>
            <person name="Kollias G."/>
            <person name="Krishnan S.P."/>
            <person name="Kruger A."/>
            <person name="Kummerfeld S.K."/>
            <person name="Kurochkin I.V."/>
            <person name="Lareau L.F."/>
            <person name="Lazarevic D."/>
            <person name="Lipovich L."/>
            <person name="Liu J."/>
            <person name="Liuni S."/>
            <person name="McWilliam S."/>
            <person name="Madan Babu M."/>
            <person name="Madera M."/>
            <person name="Marchionni L."/>
            <person name="Matsuda H."/>
            <person name="Matsuzawa S."/>
            <person name="Miki H."/>
            <person name="Mignone F."/>
            <person name="Miyake S."/>
            <person name="Morris K."/>
            <person name="Mottagui-Tabar S."/>
            <person name="Mulder N."/>
            <person name="Nakano N."/>
            <person name="Nakauchi H."/>
            <person name="Ng P."/>
            <person name="Nilsson R."/>
            <person name="Nishiguchi S."/>
            <person name="Nishikawa S."/>
            <person name="Nori F."/>
            <person name="Ohara O."/>
            <person name="Okazaki Y."/>
            <person name="Orlando V."/>
            <person name="Pang K.C."/>
            <person name="Pavan W.J."/>
            <person name="Pavesi G."/>
            <person name="Pesole G."/>
            <person name="Petrovsky N."/>
            <person name="Piazza S."/>
            <person name="Reed J."/>
            <person name="Reid J.F."/>
            <person name="Ring B.Z."/>
            <person name="Ringwald M."/>
            <person name="Rost B."/>
            <person name="Ruan Y."/>
            <person name="Salzberg S.L."/>
            <person name="Sandelin A."/>
            <person name="Schneider C."/>
            <person name="Schoenbach C."/>
            <person name="Sekiguchi K."/>
            <person name="Semple C.A."/>
            <person name="Seno S."/>
            <person name="Sessa L."/>
            <person name="Sheng Y."/>
            <person name="Shibata Y."/>
            <person name="Shimada H."/>
            <person name="Shimada K."/>
            <person name="Silva D."/>
            <person name="Sinclair B."/>
            <person name="Sperling S."/>
            <person name="Stupka E."/>
            <person name="Sugiura K."/>
            <person name="Sultana R."/>
            <person name="Takenaka Y."/>
            <person name="Taki K."/>
            <person name="Tammoja K."/>
            <person name="Tan S.L."/>
            <person name="Tang S."/>
            <person name="Taylor M.S."/>
            <person name="Tegner J."/>
            <person name="Teichmann S.A."/>
            <person name="Ueda H.R."/>
            <person name="van Nimwegen E."/>
            <person name="Verardo R."/>
            <person name="Wei C.L."/>
            <person name="Yagi K."/>
            <person name="Yamanishi H."/>
            <person name="Zabarovsky E."/>
            <person name="Zhu S."/>
            <person name="Zimmer A."/>
            <person name="Hide W."/>
            <person name="Bult C."/>
            <person name="Grimmond S.M."/>
            <person name="Teasdale R.D."/>
            <person name="Liu E.T."/>
            <person name="Brusic V."/>
            <person name="Quackenbush J."/>
            <person name="Wahlestedt C."/>
            <person name="Mattick J.S."/>
            <person name="Hume D.A."/>
            <person name="Kai C."/>
            <person name="Sasaki D."/>
            <person name="Tomaru Y."/>
            <person name="Fukuda S."/>
            <person name="Kanamori-Katayama M."/>
            <person name="Suzuki M."/>
            <person name="Aoki J."/>
            <person name="Arakawa T."/>
            <person name="Iida J."/>
            <person name="Imamura K."/>
            <person name="Itoh M."/>
            <person name="Kato T."/>
            <person name="Kawaji H."/>
            <person name="Kawagashira N."/>
            <person name="Kawashima T."/>
            <person name="Kojima M."/>
            <person name="Kondo S."/>
            <person name="Konno H."/>
            <person name="Nakano K."/>
            <person name="Ninomiya N."/>
            <person name="Nishio T."/>
            <person name="Okada M."/>
            <person name="Plessy C."/>
            <person name="Shibata K."/>
            <person name="Shiraki T."/>
            <person name="Suzuki S."/>
            <person name="Tagami M."/>
            <person name="Waki K."/>
            <person name="Watahiki A."/>
            <person name="Okamura-Oho Y."/>
            <person name="Suzuki H."/>
            <person name="Kawai J."/>
            <person name="Hayashizaki Y."/>
        </authorList>
    </citation>
    <scope>NUCLEOTIDE SEQUENCE [LARGE SCALE MRNA]</scope>
    <source>
        <strain>C57BL/6J</strain>
        <tissue>Forelimb</tissue>
    </source>
</reference>
<reference key="3">
    <citation type="journal article" date="2009" name="PLoS Biol.">
        <title>Lineage-specific biology revealed by a finished genome assembly of the mouse.</title>
        <authorList>
            <person name="Church D.M."/>
            <person name="Goodstadt L."/>
            <person name="Hillier L.W."/>
            <person name="Zody M.C."/>
            <person name="Goldstein S."/>
            <person name="She X."/>
            <person name="Bult C.J."/>
            <person name="Agarwala R."/>
            <person name="Cherry J.L."/>
            <person name="DiCuccio M."/>
            <person name="Hlavina W."/>
            <person name="Kapustin Y."/>
            <person name="Meric P."/>
            <person name="Maglott D."/>
            <person name="Birtle Z."/>
            <person name="Marques A.C."/>
            <person name="Graves T."/>
            <person name="Zhou S."/>
            <person name="Teague B."/>
            <person name="Potamousis K."/>
            <person name="Churas C."/>
            <person name="Place M."/>
            <person name="Herschleb J."/>
            <person name="Runnheim R."/>
            <person name="Forrest D."/>
            <person name="Amos-Landgraf J."/>
            <person name="Schwartz D.C."/>
            <person name="Cheng Z."/>
            <person name="Lindblad-Toh K."/>
            <person name="Eichler E.E."/>
            <person name="Ponting C.P."/>
        </authorList>
    </citation>
    <scope>NUCLEOTIDE SEQUENCE [LARGE SCALE GENOMIC DNA]</scope>
    <source>
        <strain>C57BL/6J</strain>
    </source>
</reference>
<reference key="4">
    <citation type="journal article" date="2004" name="Genome Res.">
        <title>The status, quality, and expansion of the NIH full-length cDNA project: the Mammalian Gene Collection (MGC).</title>
        <authorList>
            <consortium name="The MGC Project Team"/>
        </authorList>
    </citation>
    <scope>NUCLEOTIDE SEQUENCE [LARGE SCALE MRNA]</scope>
    <source>
        <strain>C57BL/6J</strain>
        <tissue>Brain</tissue>
    </source>
</reference>
<reference key="5">
    <citation type="journal article" date="1990" name="J. Biol. Chem.">
        <title>Induction of alkaline phosphatase in mouse L cells by overexpression of the catalytic subunit of cAMP-dependent protein kinase.</title>
        <authorList>
            <person name="Brown N.A."/>
            <person name="Stofko R.E."/>
            <person name="Uhler M.D."/>
        </authorList>
    </citation>
    <scope>NUCLEOTIDE SEQUENCE [MRNA] OF 1-6</scope>
</reference>
<reference key="6">
    <citation type="journal article" date="1995" name="Development">
        <title>Tissue non-specific alkaline phosphatase is expressed in both embryonic and extraembryonic lineages during mouse embryogenesis but is not required for migration of primordial germ cells.</title>
        <authorList>
            <person name="MacGregor G.R."/>
            <person name="Zambrowicz B.P."/>
            <person name="Soriano P."/>
        </authorList>
    </citation>
    <scope>DEVELOPMENTAL STAGE</scope>
</reference>
<reference key="7">
    <citation type="journal article" date="1995" name="Nat. Genet.">
        <title>Mice lacking tissue non-specific alkaline phosphatase die from seizures due to defective metabolism of vitamin B-6.</title>
        <authorList>
            <person name="Waymire K.G."/>
            <person name="Mahuren J.D."/>
            <person name="Jaje J.M."/>
            <person name="Guilarte T.R."/>
            <person name="Coburn S.P."/>
            <person name="MacGregor G.R."/>
        </authorList>
    </citation>
    <scope>FUNCTION</scope>
    <scope>DISRUPTION PHENOTYPE</scope>
</reference>
<reference key="8">
    <citation type="journal article" date="1997" name="Dev. Dyn.">
        <title>Inactivation of two mouse alkaline phosphatase genes and establishment of a model of infantile hypophosphatasia.</title>
        <authorList>
            <person name="Narisawa S."/>
            <person name="Froehlander N."/>
            <person name="Millan J.L."/>
        </authorList>
    </citation>
    <scope>FUNCTION</scope>
    <scope>DISRUPTION PHENOTYPE</scope>
</reference>
<reference key="9">
    <citation type="journal article" date="1999" name="J. Bone Miner. Res.">
        <title>Alkaline phosphatase knock-out mice recapitulate the metabolic and skeletal defects of infantile hypophosphatasia.</title>
        <authorList>
            <person name="Fedde K.N."/>
            <person name="Blair L."/>
            <person name="Silverstein J."/>
            <person name="Coburn S.P."/>
            <person name="Ryan L.M."/>
            <person name="Weinstein R.S."/>
            <person name="Waymire K."/>
            <person name="Narisawa S."/>
            <person name="Millan J.L."/>
            <person name="MacGregor G.R."/>
            <person name="Whyte M.P."/>
        </authorList>
    </citation>
    <scope>FUNCTION</scope>
    <scope>DISRUPTION PHENOTYPE</scope>
</reference>
<reference key="10">
    <citation type="journal article" date="2000" name="Am. J. Physiol.">
        <title>Osteoblast tissue-nonspecific alkaline phosphatase antagonizes and regulates PC-1.</title>
        <authorList>
            <person name="Johnson K.A."/>
            <person name="Hessle L."/>
            <person name="Vaingankar S."/>
            <person name="Wennberg C."/>
            <person name="Mauro S."/>
            <person name="Narisawa S."/>
            <person name="Goding J.W."/>
            <person name="Sano K."/>
            <person name="Millan J.L."/>
            <person name="Terkeltaub R."/>
        </authorList>
    </citation>
    <scope>FUNCTION</scope>
</reference>
<reference key="11">
    <citation type="journal article" date="2000" name="J. Bone Miner. Res.">
        <title>Functional characterization of osteoblasts and osteoclasts from alkaline phosphatase knockout mice.</title>
        <authorList>
            <person name="Wennberg C."/>
            <person name="Hessle L."/>
            <person name="Lundberg P."/>
            <person name="Mauro S."/>
            <person name="Narisawa S."/>
            <person name="Lerner U.H."/>
            <person name="Millan J.L."/>
        </authorList>
    </citation>
    <scope>FUNCTION</scope>
    <scope>DISRUPTION PHENOTYPE</scope>
</reference>
<reference key="12">
    <citation type="journal article" date="2001" name="J. Pathol.">
        <title>Abnormal vitamin B6 metabolism in alkaline phosphatase knock-out mice causes multiple abnormalities, but not the impaired bone mineralization.</title>
        <authorList>
            <person name="Narisawa S."/>
            <person name="Wennberg C."/>
            <person name="Millan J.L."/>
        </authorList>
    </citation>
    <scope>DISRUPTION PHENOTYPE</scope>
</reference>
<reference key="13">
    <citation type="journal article" date="2002" name="Proc. Natl. Acad. Sci. U.S.A.">
        <title>Tissue-nonspecific alkaline phosphatase and plasma cell membrane glycoprotein-1 are central antagonistic regulators of bone mineralization.</title>
        <authorList>
            <person name="Hessle L."/>
            <person name="Johnson K.A."/>
            <person name="Anderson H.C."/>
            <person name="Narisawa S."/>
            <person name="Sali A."/>
            <person name="Goding J.W."/>
            <person name="Terkeltaub R."/>
            <person name="Millan J.L."/>
        </authorList>
    </citation>
    <scope>FUNCTION</scope>
    <scope>DISRUPTION PHENOTYPE</scope>
</reference>
<reference key="14">
    <citation type="journal article" date="2004" name="Am. J. Pathol.">
        <title>Impaired calcification around matrix vesicles of growth plate and bone in alkaline phosphatase-deficient mice.</title>
        <authorList>
            <person name="Anderson H.C."/>
            <person name="Sipe J.B."/>
            <person name="Hessle L."/>
            <person name="Dhanyamraju R."/>
            <person name="Atti E."/>
            <person name="Camacho N.P."/>
            <person name="Millan J.L."/>
            <person name="Dhamyamraju R."/>
        </authorList>
    </citation>
    <scope>FUNCTION</scope>
    <scope>DISRUPTION PHENOTYPE</scope>
</reference>
<reference key="15">
    <citation type="journal article" date="2009" name="Nat. Biotechnol.">
        <title>Mass-spectrometric identification and relative quantification of N-linked cell surface glycoproteins.</title>
        <authorList>
            <person name="Wollscheid B."/>
            <person name="Bausch-Fluck D."/>
            <person name="Henderson C."/>
            <person name="O'Brien R."/>
            <person name="Bibel M."/>
            <person name="Schiess R."/>
            <person name="Aebersold R."/>
            <person name="Watts J.D."/>
        </authorList>
    </citation>
    <scope>GLYCOSYLATION [LARGE SCALE ANALYSIS] AT ASN-140; ASN-230; ASN-303 AND ASN-430</scope>
</reference>
<reference key="16">
    <citation type="journal article" date="2010" name="Cell">
        <title>A tissue-specific atlas of mouse protein phosphorylation and expression.</title>
        <authorList>
            <person name="Huttlin E.L."/>
            <person name="Jedrychowski M.P."/>
            <person name="Elias J.E."/>
            <person name="Goswami T."/>
            <person name="Rad R."/>
            <person name="Beausoleil S.A."/>
            <person name="Villen J."/>
            <person name="Haas W."/>
            <person name="Sowa M.E."/>
            <person name="Gygi S.P."/>
        </authorList>
    </citation>
    <scope>PHOSPHORYLATION [LARGE SCALE ANALYSIS] AT SER-110</scope>
    <scope>IDENTIFICATION BY MASS SPECTROMETRY [LARGE SCALE ANALYSIS]</scope>
    <source>
        <tissue>Brown adipose tissue</tissue>
        <tissue>Heart</tissue>
        <tissue>Kidney</tissue>
        <tissue>Lung</tissue>
        <tissue>Pancreas</tissue>
        <tissue>Spleen</tissue>
        <tissue>Testis</tissue>
    </source>
</reference>
<reference key="17">
    <citation type="journal article" date="2010" name="J. Bone Miner. Res.">
        <title>Kinetic analysis of substrate utilization by native and TNAP-, NPP1-, or PHOSPHO1-deficient matrix vesicles.</title>
        <authorList>
            <person name="Ciancaglini P."/>
            <person name="Yadav M.C."/>
            <person name="Simao A.M."/>
            <person name="Narisawa S."/>
            <person name="Pizauro J.M."/>
            <person name="Farquharson C."/>
            <person name="Hoylaerts M.F."/>
            <person name="Millan J.L."/>
        </authorList>
    </citation>
    <scope>FUNCTION</scope>
    <scope>CATALYTIC ACTIVITY</scope>
    <scope>SUBCELLULAR LOCATION</scope>
</reference>
<reference key="18">
    <citation type="journal article" date="2011" name="J. Bone Miner. Res.">
        <title>Loss of skeletal mineralization by the simultaneous ablation of PHOSPHO1 and alkaline phosphatase function: a unified model of the mechanisms of initiation of skeletal calcification.</title>
        <authorList>
            <person name="Yadav M.C."/>
            <person name="Simao A.M."/>
            <person name="Narisawa S."/>
            <person name="Huesa C."/>
            <person name="McKee M.D."/>
            <person name="Farquharson C."/>
            <person name="Millan J.L."/>
        </authorList>
    </citation>
    <scope>FUNCTION</scope>
    <scope>DISRUPTION PHENOTYPE</scope>
</reference>
<reference key="19">
    <citation type="journal article" date="2013" name="Calcif. Tissue Int.">
        <title>Effects of pH on the production of phosphate and pyrophosphate by matrix vesicles' biomimetics.</title>
        <authorList>
            <person name="Simao A.M."/>
            <person name="Bolean M."/>
            <person name="Hoylaerts M.F."/>
            <person name="Millan J.L."/>
            <person name="Ciancaglini P."/>
        </authorList>
    </citation>
    <scope>FUNCTION</scope>
    <scope>CATALYTIC ACTIVITY</scope>
    <scope>SUBCELLULAR LOCATION</scope>
</reference>
<reference key="20">
    <citation type="journal article" date="2013" name="Eur. J. Oral Sci.">
        <title>Msx1 regulates proliferation and differentiation of mouse dental mesenchymal cells in culture.</title>
        <authorList>
            <person name="Feng X.Y."/>
            <person name="Zhao Y.M."/>
            <person name="Wang W.J."/>
            <person name="Ge L.H."/>
        </authorList>
    </citation>
    <scope>DEVELOPMENTAL STAGE</scope>
</reference>
<reference key="21">
    <citation type="journal article" date="2013" name="J. Bone Miner. Res.">
        <title>In vivo overexpression of tissue-nonspecific alkaline phosphatase increases skeletal mineralization and affects the phosphorylation status of osteopontin.</title>
        <authorList>
            <person name="Narisawa S."/>
            <person name="Yadav M.C."/>
            <person name="Millan J.L."/>
        </authorList>
    </citation>
    <scope>FUNCTION</scope>
</reference>
<reference key="22">
    <citation type="journal article" date="2013" name="J. Neurosci.">
        <title>Tissue-nonspecific alkaline phosphatase acts redundantly with PAP and NT5E to generate adenosine in the dorsal spinal cord.</title>
        <authorList>
            <person name="Street S.E."/>
            <person name="Kramer N.J."/>
            <person name="Walsh P.L."/>
            <person name="Taylor-Blake B."/>
            <person name="Yadav M.C."/>
            <person name="King I.F."/>
            <person name="Vihko P."/>
            <person name="Wightman R.M."/>
            <person name="Millan J.L."/>
            <person name="Zylka M.J."/>
        </authorList>
    </citation>
    <scope>FUNCTION</scope>
    <scope>CATALYTIC ACTIVITY</scope>
    <scope>TISSUE SPECIFICITY</scope>
</reference>
<reference key="23">
    <citation type="journal article" date="2015" name="Biochem. Biophys. Rep.">
        <title>The functional co-operativity of Tissue-nonspecific alkaline phosphatase (TNAP) and PHOSPHO1 during initiation of skeletal mineralization.</title>
        <authorList>
            <person name="Huesa C."/>
            <person name="Houston D."/>
            <person name="Kiffer-Moreira T."/>
            <person name="Yadav M.M."/>
            <person name="Millan J.L."/>
            <person name="Farquharson C."/>
        </authorList>
    </citation>
    <scope>FUNCTION</scope>
</reference>
<reference key="24">
    <citation type="journal article" date="2018" name="Bioorg. Med. Chem. Lett.">
        <title>Discovery of 5-((5-chloro-2-methoxyphenyl)sulfonamido)nicotinamide (SBI-425), a potent and orally bioavailable tissue-nonspecific alkaline phosphatase (TNAP) inhibitor.</title>
        <authorList>
            <person name="Pinkerton A.B."/>
            <person name="Sergienko E."/>
            <person name="Bravo Y."/>
            <person name="Dahl R."/>
            <person name="Ma C.T."/>
            <person name="Sun Q."/>
            <person name="Jackson M.R."/>
            <person name="Cosford N.D.P."/>
            <person name="Millan J.L."/>
        </authorList>
    </citation>
    <scope>CATALYTIC ACTIVITY</scope>
    <scope>ACTIVITY REGULATION</scope>
</reference>
<reference key="25">
    <citation type="journal article" date="2018" name="Eur. J. Oral Sci.">
        <title>Homeobox protein MSX-1 inhibits expression of bone morphogenetic protein 2, bone morphogenetic protein 4, and lymphoid enhancer-binding factor 1 via Wnt/beta-catenin signaling to prevent differentiation of dental mesenchymal cells during the late bell stage.</title>
        <authorList>
            <person name="Feng X.Y."/>
            <person name="Wu X.S."/>
            <person name="Wang J.S."/>
            <person name="Zhang C.M."/>
            <person name="Wang S.L."/>
        </authorList>
    </citation>
    <scope>DEVELOPMENTAL STAGE</scope>
</reference>
<reference key="26">
    <citation type="journal article" date="2020" name="Biochem. Biophys. Res. Commun.">
        <title>Tissue-nonspecific alkaline phosphatase promotes the osteogenic differentiation of osteoprogenitor cells.</title>
        <authorList>
            <person name="Nakamura T."/>
            <person name="Nakamura-Takahashi A."/>
            <person name="Kasahara M."/>
            <person name="Yamaguchi A."/>
            <person name="Azuma T."/>
        </authorList>
    </citation>
    <scope>FUNCTION</scope>
</reference>
<reference key="27">
    <citation type="journal article" date="2020" name="Bone">
        <title>Tissue-nonspecific alkaline phosphatase is an anti-inflammatory nucleotidase.</title>
        <authorList>
            <person name="Bessueille L."/>
            <person name="Briolay A."/>
            <person name="Como J."/>
            <person name="Mebarek S."/>
            <person name="Mansouri C."/>
            <person name="Gleizes M."/>
            <person name="El Jamal A."/>
            <person name="Buchet R."/>
            <person name="Dumontet C."/>
            <person name="Matera E.L."/>
            <person name="Mornet E."/>
            <person name="Millan J.L."/>
            <person name="Fonta C."/>
            <person name="Magne D."/>
        </authorList>
    </citation>
    <scope>FUNCTION</scope>
</reference>
<reference key="28">
    <citation type="journal article" date="2021" name="Nature">
        <title>Mitochondrial TNAP controls thermogenesis by hydrolysis of phosphocreatine.</title>
        <authorList>
            <person name="Sun Y."/>
            <person name="Rahbani J.F."/>
            <person name="Jedrychowski M.P."/>
            <person name="Riley C.L."/>
            <person name="Vidoni S."/>
            <person name="Bogoslavski D."/>
            <person name="Hu B."/>
            <person name="Dumesic P.A."/>
            <person name="Zeng X."/>
            <person name="Wang A.B."/>
            <person name="Knudsen N.H."/>
            <person name="Kim C.R."/>
            <person name="Marasciullo A."/>
            <person name="Millan J.L."/>
            <person name="Chouchani E.T."/>
            <person name="Kazak L."/>
            <person name="Spiegelman B.M."/>
        </authorList>
    </citation>
    <scope>FUNCTION</scope>
    <scope>CATALYTIC ACTIVITY</scope>
    <scope>ACTIVITY REGULATION</scope>
    <scope>SUBCELLULAR LOCATION</scope>
    <scope>INDUCTION BY COLD</scope>
    <scope>DISRUPTION PHENOTYPE</scope>
</reference>
<dbReference type="EC" id="3.1.3.1" evidence="16"/>
<dbReference type="EC" id="3.9.1.1" evidence="23"/>
<dbReference type="EMBL" id="J02980">
    <property type="protein sequence ID" value="AAA39928.1"/>
    <property type="molecule type" value="mRNA"/>
</dbReference>
<dbReference type="EMBL" id="AK161780">
    <property type="protein sequence ID" value="BAE36569.1"/>
    <property type="molecule type" value="mRNA"/>
</dbReference>
<dbReference type="EMBL" id="AK167023">
    <property type="protein sequence ID" value="BAE39196.1"/>
    <property type="molecule type" value="mRNA"/>
</dbReference>
<dbReference type="EMBL" id="AL805954">
    <property type="status" value="NOT_ANNOTATED_CDS"/>
    <property type="molecule type" value="Genomic_DNA"/>
</dbReference>
<dbReference type="EMBL" id="AL807764">
    <property type="status" value="NOT_ANNOTATED_CDS"/>
    <property type="molecule type" value="Genomic_DNA"/>
</dbReference>
<dbReference type="EMBL" id="BC065175">
    <property type="protein sequence ID" value="AAH65175.1"/>
    <property type="molecule type" value="mRNA"/>
</dbReference>
<dbReference type="EMBL" id="M54798">
    <property type="protein sequence ID" value="AAA37217.1"/>
    <property type="molecule type" value="mRNA"/>
</dbReference>
<dbReference type="CCDS" id="CCDS18821.1"/>
<dbReference type="RefSeq" id="NP_001274101.1">
    <property type="nucleotide sequence ID" value="NM_001287172.2"/>
</dbReference>
<dbReference type="RefSeq" id="NP_001416310.1">
    <property type="nucleotide sequence ID" value="NM_001429381.1"/>
</dbReference>
<dbReference type="RefSeq" id="NP_031457.2">
    <property type="nucleotide sequence ID" value="NM_007431.4"/>
</dbReference>
<dbReference type="RefSeq" id="XP_006538560.1">
    <property type="nucleotide sequence ID" value="XM_006538497.3"/>
</dbReference>
<dbReference type="RefSeq" id="XP_006538561.1">
    <property type="nucleotide sequence ID" value="XM_006538498.4"/>
</dbReference>
<dbReference type="RefSeq" id="XP_006538562.1">
    <property type="nucleotide sequence ID" value="XM_006538499.3"/>
</dbReference>
<dbReference type="RefSeq" id="XP_006538563.1">
    <property type="nucleotide sequence ID" value="XM_006538500.2"/>
</dbReference>
<dbReference type="RefSeq" id="XP_017175413.1">
    <property type="nucleotide sequence ID" value="XM_017319924.1"/>
</dbReference>
<dbReference type="SMR" id="P09242"/>
<dbReference type="BioGRID" id="198053">
    <property type="interactions" value="7"/>
</dbReference>
<dbReference type="FunCoup" id="P09242">
    <property type="interactions" value="210"/>
</dbReference>
<dbReference type="IntAct" id="P09242">
    <property type="interactions" value="1"/>
</dbReference>
<dbReference type="STRING" id="10090.ENSMUSP00000030551"/>
<dbReference type="ChEMBL" id="CHEMBL2660"/>
<dbReference type="GlyConnect" id="2116">
    <property type="glycosylation" value="2 N-Linked glycans (2 sites)"/>
</dbReference>
<dbReference type="GlyCosmos" id="P09242">
    <property type="glycosylation" value="5 sites, 8 glycans"/>
</dbReference>
<dbReference type="GlyGen" id="P09242">
    <property type="glycosylation" value="6 sites, 7 N-linked glycans (5 sites), 1 O-linked glycan (1 site)"/>
</dbReference>
<dbReference type="iPTMnet" id="P09242"/>
<dbReference type="PhosphoSitePlus" id="P09242"/>
<dbReference type="SwissPalm" id="P09242"/>
<dbReference type="CPTAC" id="non-CPTAC-3492"/>
<dbReference type="jPOST" id="P09242"/>
<dbReference type="PaxDb" id="10090-ENSMUSP00000030551"/>
<dbReference type="PeptideAtlas" id="P09242"/>
<dbReference type="ProteomicsDB" id="289876"/>
<dbReference type="Antibodypedia" id="2059">
    <property type="antibodies" value="1071 antibodies from 44 providers"/>
</dbReference>
<dbReference type="DNASU" id="11647"/>
<dbReference type="Ensembl" id="ENSMUST00000030551.11">
    <property type="protein sequence ID" value="ENSMUSP00000030551.5"/>
    <property type="gene ID" value="ENSMUSG00000028766.11"/>
</dbReference>
<dbReference type="GeneID" id="11647"/>
<dbReference type="KEGG" id="mmu:11647"/>
<dbReference type="UCSC" id="uc008vjr.3">
    <property type="organism name" value="mouse"/>
</dbReference>
<dbReference type="AGR" id="MGI:87983"/>
<dbReference type="CTD" id="249"/>
<dbReference type="MGI" id="MGI:87983">
    <property type="gene designation" value="Alpl"/>
</dbReference>
<dbReference type="VEuPathDB" id="HostDB:ENSMUSG00000028766"/>
<dbReference type="eggNOG" id="KOG4126">
    <property type="taxonomic scope" value="Eukaryota"/>
</dbReference>
<dbReference type="GeneTree" id="ENSGT00950000183063"/>
<dbReference type="HOGENOM" id="CLU_008539_4_0_1"/>
<dbReference type="InParanoid" id="P09242"/>
<dbReference type="OMA" id="YQLMHNV"/>
<dbReference type="OrthoDB" id="5818554at2759"/>
<dbReference type="PhylomeDB" id="P09242"/>
<dbReference type="TreeFam" id="TF323513"/>
<dbReference type="BRENDA" id="3.1.3.1">
    <property type="organism ID" value="3474"/>
</dbReference>
<dbReference type="Reactome" id="R-MMU-163125">
    <property type="pathway name" value="Post-translational modification: synthesis of GPI-anchored proteins"/>
</dbReference>
<dbReference type="SABIO-RK" id="P09242"/>
<dbReference type="BioGRID-ORCS" id="11647">
    <property type="hits" value="2 hits in 77 CRISPR screens"/>
</dbReference>
<dbReference type="CD-CODE" id="CE726F99">
    <property type="entry name" value="Postsynaptic density"/>
</dbReference>
<dbReference type="ChiTaRS" id="Alpl">
    <property type="organism name" value="mouse"/>
</dbReference>
<dbReference type="PRO" id="PR:P09242"/>
<dbReference type="Proteomes" id="UP000000589">
    <property type="component" value="Chromosome 4"/>
</dbReference>
<dbReference type="RNAct" id="P09242">
    <property type="molecule type" value="protein"/>
</dbReference>
<dbReference type="Bgee" id="ENSMUSG00000028766">
    <property type="expression patterns" value="Expressed in molar tooth and 214 other cell types or tissues"/>
</dbReference>
<dbReference type="ExpressionAtlas" id="P09242">
    <property type="expression patterns" value="baseline and differential"/>
</dbReference>
<dbReference type="GO" id="GO:0031012">
    <property type="term" value="C:extracellular matrix"/>
    <property type="evidence" value="ECO:0000314"/>
    <property type="project" value="MGI"/>
</dbReference>
<dbReference type="GO" id="GO:0065010">
    <property type="term" value="C:extracellular membrane-bounded organelle"/>
    <property type="evidence" value="ECO:0000314"/>
    <property type="project" value="MGI"/>
</dbReference>
<dbReference type="GO" id="GO:0005615">
    <property type="term" value="C:extracellular space"/>
    <property type="evidence" value="ECO:0007669"/>
    <property type="project" value="Ensembl"/>
</dbReference>
<dbReference type="GO" id="GO:0005758">
    <property type="term" value="C:mitochondrial intermembrane space"/>
    <property type="evidence" value="ECO:0000314"/>
    <property type="project" value="UniProtKB"/>
</dbReference>
<dbReference type="GO" id="GO:0031966">
    <property type="term" value="C:mitochondrial membrane"/>
    <property type="evidence" value="ECO:0000314"/>
    <property type="project" value="UniProtKB"/>
</dbReference>
<dbReference type="GO" id="GO:0005886">
    <property type="term" value="C:plasma membrane"/>
    <property type="evidence" value="ECO:0000314"/>
    <property type="project" value="MGI"/>
</dbReference>
<dbReference type="GO" id="GO:0098552">
    <property type="term" value="C:side of membrane"/>
    <property type="evidence" value="ECO:0007669"/>
    <property type="project" value="UniProtKB-KW"/>
</dbReference>
<dbReference type="GO" id="GO:0043262">
    <property type="term" value="F:ADP phosphatase activity"/>
    <property type="evidence" value="ECO:0007669"/>
    <property type="project" value="RHEA"/>
</dbReference>
<dbReference type="GO" id="GO:0004035">
    <property type="term" value="F:alkaline phosphatase activity"/>
    <property type="evidence" value="ECO:0000314"/>
    <property type="project" value="MGI"/>
</dbReference>
<dbReference type="GO" id="GO:0016887">
    <property type="term" value="F:ATP hydrolysis activity"/>
    <property type="evidence" value="ECO:0007669"/>
    <property type="project" value="RHEA"/>
</dbReference>
<dbReference type="GO" id="GO:0005509">
    <property type="term" value="F:calcium ion binding"/>
    <property type="evidence" value="ECO:0000250"/>
    <property type="project" value="UniProtKB"/>
</dbReference>
<dbReference type="GO" id="GO:0004427">
    <property type="term" value="F:inorganic diphosphate phosphatase activity"/>
    <property type="evidence" value="ECO:0007669"/>
    <property type="project" value="RHEA"/>
</dbReference>
<dbReference type="GO" id="GO:0050187">
    <property type="term" value="F:phosphoamidase activity"/>
    <property type="evidence" value="ECO:0000314"/>
    <property type="project" value="UniProtKB"/>
</dbReference>
<dbReference type="GO" id="GO:0052732">
    <property type="term" value="F:phosphoethanolamine phosphatase activity"/>
    <property type="evidence" value="ECO:0007669"/>
    <property type="project" value="Ensembl"/>
</dbReference>
<dbReference type="GO" id="GO:0033883">
    <property type="term" value="F:pyridoxal phosphatase activity"/>
    <property type="evidence" value="ECO:0000250"/>
    <property type="project" value="UniProtKB"/>
</dbReference>
<dbReference type="GO" id="GO:0016462">
    <property type="term" value="F:pyrophosphatase activity"/>
    <property type="evidence" value="ECO:0000314"/>
    <property type="project" value="UniProtKB"/>
</dbReference>
<dbReference type="GO" id="GO:0030282">
    <property type="term" value="P:bone mineralization"/>
    <property type="evidence" value="ECO:0000315"/>
    <property type="project" value="UniProtKB"/>
</dbReference>
<dbReference type="GO" id="GO:0055074">
    <property type="term" value="P:calcium ion homeostasis"/>
    <property type="evidence" value="ECO:0000314"/>
    <property type="project" value="MGI"/>
</dbReference>
<dbReference type="GO" id="GO:0019725">
    <property type="term" value="P:cellular homeostasis"/>
    <property type="evidence" value="ECO:0000315"/>
    <property type="project" value="MGI"/>
</dbReference>
<dbReference type="GO" id="GO:0071529">
    <property type="term" value="P:cementum mineralization"/>
    <property type="evidence" value="ECO:0007669"/>
    <property type="project" value="Ensembl"/>
</dbReference>
<dbReference type="GO" id="GO:0003006">
    <property type="term" value="P:developmental process involved in reproduction"/>
    <property type="evidence" value="ECO:0000316"/>
    <property type="project" value="MGI"/>
</dbReference>
<dbReference type="GO" id="GO:0001958">
    <property type="term" value="P:endochondral ossification"/>
    <property type="evidence" value="ECO:0000315"/>
    <property type="project" value="MGI"/>
</dbReference>
<dbReference type="GO" id="GO:0140651">
    <property type="term" value="P:futile creatine cycle"/>
    <property type="evidence" value="ECO:0000314"/>
    <property type="project" value="UniProt"/>
</dbReference>
<dbReference type="GO" id="GO:0140928">
    <property type="term" value="P:inhibition of non-skeletal tissue mineralization"/>
    <property type="evidence" value="ECO:0000314"/>
    <property type="project" value="MGI"/>
</dbReference>
<dbReference type="GO" id="GO:0055062">
    <property type="term" value="P:phosphate ion homeostasis"/>
    <property type="evidence" value="ECO:0000314"/>
    <property type="project" value="MGI"/>
</dbReference>
<dbReference type="GO" id="GO:0120162">
    <property type="term" value="P:positive regulation of cold-induced thermogenesis"/>
    <property type="evidence" value="ECO:0000314"/>
    <property type="project" value="UniProtKB"/>
</dbReference>
<dbReference type="GO" id="GO:0042822">
    <property type="term" value="P:pyridoxal phosphate metabolic process"/>
    <property type="evidence" value="ECO:0000314"/>
    <property type="project" value="UniProtKB"/>
</dbReference>
<dbReference type="GO" id="GO:0046677">
    <property type="term" value="P:response to antibiotic"/>
    <property type="evidence" value="ECO:0000314"/>
    <property type="project" value="MGI"/>
</dbReference>
<dbReference type="GO" id="GO:0051384">
    <property type="term" value="P:response to glucocorticoid"/>
    <property type="evidence" value="ECO:0007669"/>
    <property type="project" value="Ensembl"/>
</dbReference>
<dbReference type="GO" id="GO:0032868">
    <property type="term" value="P:response to insulin"/>
    <property type="evidence" value="ECO:0007669"/>
    <property type="project" value="Ensembl"/>
</dbReference>
<dbReference type="GO" id="GO:0032496">
    <property type="term" value="P:response to lipopolysaccharide"/>
    <property type="evidence" value="ECO:0007669"/>
    <property type="project" value="Ensembl"/>
</dbReference>
<dbReference type="GO" id="GO:0036005">
    <property type="term" value="P:response to macrophage colony-stimulating factor"/>
    <property type="evidence" value="ECO:0007669"/>
    <property type="project" value="Ensembl"/>
</dbReference>
<dbReference type="GO" id="GO:1904383">
    <property type="term" value="P:response to sodium phosphate"/>
    <property type="evidence" value="ECO:0000314"/>
    <property type="project" value="MGI"/>
</dbReference>
<dbReference type="GO" id="GO:0034516">
    <property type="term" value="P:response to vitamin B6"/>
    <property type="evidence" value="ECO:0000315"/>
    <property type="project" value="MGI"/>
</dbReference>
<dbReference type="GO" id="GO:0033280">
    <property type="term" value="P:response to vitamin D"/>
    <property type="evidence" value="ECO:0007669"/>
    <property type="project" value="Ensembl"/>
</dbReference>
<dbReference type="CDD" id="cd16012">
    <property type="entry name" value="ALP"/>
    <property type="match status" value="1"/>
</dbReference>
<dbReference type="FunFam" id="3.40.720.10:FF:000008">
    <property type="entry name" value="Alkaline phosphatase"/>
    <property type="match status" value="1"/>
</dbReference>
<dbReference type="Gene3D" id="3.40.720.10">
    <property type="entry name" value="Alkaline Phosphatase, subunit A"/>
    <property type="match status" value="1"/>
</dbReference>
<dbReference type="InterPro" id="IPR001952">
    <property type="entry name" value="Alkaline_phosphatase"/>
</dbReference>
<dbReference type="InterPro" id="IPR018299">
    <property type="entry name" value="Alkaline_phosphatase_AS"/>
</dbReference>
<dbReference type="InterPro" id="IPR017850">
    <property type="entry name" value="Alkaline_phosphatase_core_sf"/>
</dbReference>
<dbReference type="PANTHER" id="PTHR11596">
    <property type="entry name" value="ALKALINE PHOSPHATASE"/>
    <property type="match status" value="1"/>
</dbReference>
<dbReference type="PANTHER" id="PTHR11596:SF74">
    <property type="entry name" value="ALKALINE PHOSPHATASE, TISSUE-NONSPECIFIC ISOZYME"/>
    <property type="match status" value="1"/>
</dbReference>
<dbReference type="Pfam" id="PF00245">
    <property type="entry name" value="Alk_phosphatase"/>
    <property type="match status" value="1"/>
</dbReference>
<dbReference type="PRINTS" id="PR00113">
    <property type="entry name" value="ALKPHPHTASE"/>
</dbReference>
<dbReference type="SMART" id="SM00098">
    <property type="entry name" value="alkPPc"/>
    <property type="match status" value="1"/>
</dbReference>
<dbReference type="SUPFAM" id="SSF53649">
    <property type="entry name" value="Alkaline phosphatase-like"/>
    <property type="match status" value="1"/>
</dbReference>
<dbReference type="PROSITE" id="PS00123">
    <property type="entry name" value="ALKALINE_PHOSPHATASE"/>
    <property type="match status" value="1"/>
</dbReference>
<accession>P09242</accession>
<accession>Q6P1B0</accession>
<protein>
    <recommendedName>
        <fullName evidence="28 31">Alkaline phosphatase, tissue-nonspecific isozyme</fullName>
        <shortName>AP-TNAP</shortName>
        <shortName evidence="31">TNAP</shortName>
        <shortName evidence="28">TNSALP</shortName>
        <ecNumber evidence="16">3.1.3.1</ecNumber>
    </recommendedName>
    <alternativeName>
        <fullName>Alkaline phosphatase 2</fullName>
    </alternativeName>
    <alternativeName>
        <fullName>Alkaline phosphatase liver/bone/kidney isozyme</fullName>
    </alternativeName>
    <alternativeName>
        <fullName evidence="32">Phosphoamidase</fullName>
    </alternativeName>
    <alternativeName>
        <fullName evidence="30">Phosphocreatine phosphatase</fullName>
        <ecNumber evidence="23">3.9.1.1</ecNumber>
    </alternativeName>
</protein>
<organism>
    <name type="scientific">Mus musculus</name>
    <name type="common">Mouse</name>
    <dbReference type="NCBI Taxonomy" id="10090"/>
    <lineage>
        <taxon>Eukaryota</taxon>
        <taxon>Metazoa</taxon>
        <taxon>Chordata</taxon>
        <taxon>Craniata</taxon>
        <taxon>Vertebrata</taxon>
        <taxon>Euteleostomi</taxon>
        <taxon>Mammalia</taxon>
        <taxon>Eutheria</taxon>
        <taxon>Euarchontoglires</taxon>
        <taxon>Glires</taxon>
        <taxon>Rodentia</taxon>
        <taxon>Myomorpha</taxon>
        <taxon>Muroidea</taxon>
        <taxon>Muridae</taxon>
        <taxon>Murinae</taxon>
        <taxon>Mus</taxon>
        <taxon>Mus</taxon>
    </lineage>
</organism>
<feature type="signal peptide">
    <location>
        <begin position="1"/>
        <end position="17"/>
    </location>
</feature>
<feature type="chain" id="PRO_0000024025" description="Alkaline phosphatase, tissue-nonspecific isozyme">
    <location>
        <begin position="18"/>
        <end position="501"/>
    </location>
</feature>
<feature type="propeptide" id="PRO_0000024026" description="Removed in mature form" evidence="3">
    <location>
        <begin position="502"/>
        <end position="524"/>
    </location>
</feature>
<feature type="active site" description="Phosphoserine intermediate" evidence="2 4">
    <location>
        <position position="110"/>
    </location>
</feature>
<feature type="binding site" evidence="2">
    <location>
        <position position="60"/>
    </location>
    <ligand>
        <name>Mg(2+)</name>
        <dbReference type="ChEBI" id="CHEBI:18420"/>
    </ligand>
</feature>
<feature type="binding site" evidence="2">
    <location>
        <position position="60"/>
    </location>
    <ligand>
        <name>Zn(2+)</name>
        <dbReference type="ChEBI" id="CHEBI:29105"/>
        <label>1</label>
    </ligand>
</feature>
<feature type="binding site" evidence="2">
    <location>
        <position position="110"/>
    </location>
    <ligand>
        <name>Zn(2+)</name>
        <dbReference type="ChEBI" id="CHEBI:29105"/>
        <label>1</label>
    </ligand>
</feature>
<feature type="binding site" evidence="2">
    <location>
        <position position="173"/>
    </location>
    <ligand>
        <name>Mg(2+)</name>
        <dbReference type="ChEBI" id="CHEBI:18420"/>
    </ligand>
</feature>
<feature type="binding site" evidence="1">
    <location>
        <position position="235"/>
    </location>
    <ligand>
        <name>Ca(2+)</name>
        <dbReference type="ChEBI" id="CHEBI:29108"/>
    </ligand>
</feature>
<feature type="binding site" evidence="1">
    <location>
        <position position="290"/>
    </location>
    <ligand>
        <name>Ca(2+)</name>
        <dbReference type="ChEBI" id="CHEBI:29108"/>
    </ligand>
</feature>
<feature type="binding site" evidence="1">
    <location>
        <position position="291"/>
    </location>
    <ligand>
        <name>Ca(2+)</name>
        <dbReference type="ChEBI" id="CHEBI:29108"/>
    </ligand>
</feature>
<feature type="binding site" evidence="1">
    <location>
        <position position="306"/>
    </location>
    <ligand>
        <name>Ca(2+)</name>
        <dbReference type="ChEBI" id="CHEBI:29108"/>
    </ligand>
</feature>
<feature type="binding site" evidence="2">
    <location>
        <position position="332"/>
    </location>
    <ligand>
        <name>Mg(2+)</name>
        <dbReference type="ChEBI" id="CHEBI:18420"/>
    </ligand>
</feature>
<feature type="binding site" evidence="2">
    <location>
        <position position="337"/>
    </location>
    <ligand>
        <name>Zn(2+)</name>
        <dbReference type="ChEBI" id="CHEBI:29105"/>
        <label>2</label>
    </ligand>
</feature>
<feature type="binding site" evidence="2">
    <location>
        <position position="341"/>
    </location>
    <ligand>
        <name>Zn(2+)</name>
        <dbReference type="ChEBI" id="CHEBI:29105"/>
        <label>2</label>
    </ligand>
</feature>
<feature type="binding site" evidence="2">
    <location>
        <position position="378"/>
    </location>
    <ligand>
        <name>Zn(2+)</name>
        <dbReference type="ChEBI" id="CHEBI:29105"/>
        <label>1</label>
    </ligand>
</feature>
<feature type="binding site" evidence="2">
    <location>
        <position position="379"/>
    </location>
    <ligand>
        <name>Zn(2+)</name>
        <dbReference type="ChEBI" id="CHEBI:29105"/>
        <label>1</label>
    </ligand>
</feature>
<feature type="binding site" evidence="2">
    <location>
        <position position="454"/>
    </location>
    <ligand>
        <name>Zn(2+)</name>
        <dbReference type="ChEBI" id="CHEBI:29105"/>
        <label>2</label>
    </ligand>
</feature>
<feature type="modified residue" description="Phosphoserine" evidence="34">
    <location>
        <position position="110"/>
    </location>
</feature>
<feature type="lipid moiety-binding region" description="GPI-anchor amidated glycine" evidence="3">
    <location>
        <position position="501"/>
    </location>
</feature>
<feature type="glycosylation site" description="N-linked (GlcNAc...) asparagine" evidence="11">
    <location>
        <position position="140"/>
    </location>
</feature>
<feature type="glycosylation site" description="N-linked (GlcNAc...) asparagine" evidence="11">
    <location>
        <position position="230"/>
    </location>
</feature>
<feature type="glycosylation site" description="N-linked (GlcNAc...) asparagine" evidence="3">
    <location>
        <position position="271"/>
    </location>
</feature>
<feature type="glycosylation site" description="N-linked (GlcNAc...) asparagine" evidence="11">
    <location>
        <position position="303"/>
    </location>
</feature>
<feature type="glycosylation site" description="N-linked (GlcNAc...) asparagine" evidence="11">
    <location>
        <position position="430"/>
    </location>
</feature>
<feature type="disulfide bond" evidence="2">
    <location>
        <begin position="139"/>
        <end position="201"/>
    </location>
</feature>
<feature type="disulfide bond" evidence="2">
    <location>
        <begin position="489"/>
        <end position="497"/>
    </location>
</feature>
<feature type="sequence conflict" description="In Ref. 1; AAA39928." evidence="32" ref="1">
    <original>R</original>
    <variation>P</variation>
    <location>
        <position position="521"/>
    </location>
</feature>
<sequence length="524" mass="57514">MISPFLVLAIGTCLTNSFVPEKERDPSYWRQQAQETLKNALKLQKLNTNVAKNVIMFLGDGMGVSTVTAARILKGQLHHNTGEETRLEMDKFPFVALSKTYNTNAQVPDSAGTATAYLCGVKANEGTVGVSAATERTRCNTTQGNEVTSILRWAKDAGKSVGIVTTTRVNHATPSAAYAHSADRDWYSDNEMPPEALSQGCKDIAYQLMHNIKDIDVIMGGGRKYMYPKNRTDVEYELDEKARGTRLDGLDLISIWKSFKPRHKHSHYVWNRTELLALDPSRVDYLLGLFEPGDMQYELNRNNLTDPSLSEMVEVALRILTKNLKGFFLLVEGGRIDHGHHEGKAKQALHEAVEMDQAIGKAGAMTSQKDTLTVVTADHSHVFTFGGYTPRGNSIFGLAPMVSDTDKKPFTAILYGNGPGYKVVDGERENVSMVDYAHNNYQAQSAVPLRHETHGGEDVAVFAKGPMAHLLHGVHEQNYIPHVMAYASCIGANLDHCAWAGSGSAPSPGALLLPLAVLSLRTLF</sequence>
<name>PPBT_MOUSE</name>